<accession>P74072</accession>
<comment type="function">
    <text evidence="2">Ca(+)/H(+) antiporter that extrudes calcium in exchange for external protons. Plays an important role in salt tolerance. Does not transport sodium or lithium.</text>
</comment>
<comment type="biophysicochemical properties">
    <phDependence>
        <text evidence="2">Optimum pH is 8.0.</text>
    </phDependence>
</comment>
<comment type="subcellular location">
    <subcellularLocation>
        <location evidence="2">Cell inner membrane</location>
        <topology evidence="2">Multi-pass membrane protein</topology>
    </subcellularLocation>
</comment>
<comment type="disruption phenotype">
    <text evidence="2">Disruption causes the rapid degradation of pigments and salt-sensitive phenotype at alkaline pH.</text>
</comment>
<comment type="similarity">
    <text evidence="3">Belongs to the Ca(2+):cation antiporter (CaCA) (TC 2.A.19) family. Cation/proton exchanger (CAX) subfamily.</text>
</comment>
<reference key="1">
    <citation type="journal article" date="1996" name="DNA Res.">
        <title>Sequence analysis of the genome of the unicellular cyanobacterium Synechocystis sp. strain PCC6803. II. Sequence determination of the entire genome and assignment of potential protein-coding regions.</title>
        <authorList>
            <person name="Kaneko T."/>
            <person name="Sato S."/>
            <person name="Kotani H."/>
            <person name="Tanaka A."/>
            <person name="Asamizu E."/>
            <person name="Nakamura Y."/>
            <person name="Miyajima N."/>
            <person name="Hirosawa M."/>
            <person name="Sugiura M."/>
            <person name="Sasamoto S."/>
            <person name="Kimura T."/>
            <person name="Hosouchi T."/>
            <person name="Matsuno A."/>
            <person name="Muraki A."/>
            <person name="Nakazaki N."/>
            <person name="Naruo K."/>
            <person name="Okumura S."/>
            <person name="Shimpo S."/>
            <person name="Takeuchi C."/>
            <person name="Wada T."/>
            <person name="Watanabe A."/>
            <person name="Yamada M."/>
            <person name="Yasuda M."/>
            <person name="Tabata S."/>
        </authorList>
    </citation>
    <scope>NUCLEOTIDE SEQUENCE [LARGE SCALE GENOMIC DNA]</scope>
    <source>
        <strain>ATCC 27184 / PCC 6803 / Kazusa</strain>
    </source>
</reference>
<reference key="2">
    <citation type="journal article" date="2004" name="J. Biol. Chem.">
        <title>Isolation and functional characterization of Ca2+/H+ antiporters from cyanobacteria.</title>
        <authorList>
            <person name="Waditee R."/>
            <person name="Hossain G.S."/>
            <person name="Tanaka Y."/>
            <person name="Nakamura T."/>
            <person name="Shikata M."/>
            <person name="Takano J."/>
            <person name="Takabe T."/>
            <person name="Takabe T."/>
        </authorList>
    </citation>
    <scope>FUNCTION</scope>
    <scope>BIOPHYSICOCHEMICAL PROPERTIES</scope>
    <scope>SUBCELLULAR LOCATION</scope>
    <scope>DISRUPTION PHENOTYPE</scope>
    <source>
        <strain>ATCC 27184 / PCC 6803 / Kazusa</strain>
    </source>
</reference>
<name>CAX_SYNY3</name>
<gene>
    <name type="ordered locus">slr1336</name>
</gene>
<feature type="chain" id="PRO_0000425711" description="Ca(2+)/H(+) antiporter">
    <location>
        <begin position="1"/>
        <end position="372"/>
    </location>
</feature>
<feature type="transmembrane region" description="Helical" evidence="1">
    <location>
        <begin position="7"/>
        <end position="27"/>
    </location>
</feature>
<feature type="transmembrane region" description="Helical" evidence="1">
    <location>
        <begin position="29"/>
        <end position="49"/>
    </location>
</feature>
<feature type="transmembrane region" description="Helical" evidence="1">
    <location>
        <begin position="62"/>
        <end position="82"/>
    </location>
</feature>
<feature type="transmembrane region" description="Helical" evidence="1">
    <location>
        <begin position="94"/>
        <end position="114"/>
    </location>
</feature>
<feature type="transmembrane region" description="Helical" evidence="1">
    <location>
        <begin position="134"/>
        <end position="154"/>
    </location>
</feature>
<feature type="transmembrane region" description="Helical" evidence="1">
    <location>
        <begin position="162"/>
        <end position="182"/>
    </location>
</feature>
<feature type="transmembrane region" description="Helical" evidence="1">
    <location>
        <begin position="222"/>
        <end position="242"/>
    </location>
</feature>
<feature type="transmembrane region" description="Helical" evidence="1">
    <location>
        <begin position="251"/>
        <end position="271"/>
    </location>
</feature>
<feature type="transmembrane region" description="Helical" evidence="1">
    <location>
        <begin position="294"/>
        <end position="314"/>
    </location>
</feature>
<feature type="transmembrane region" description="Helical" evidence="1">
    <location>
        <begin position="320"/>
        <end position="340"/>
    </location>
</feature>
<feature type="transmembrane region" description="Helical" evidence="1">
    <location>
        <begin position="352"/>
        <end position="372"/>
    </location>
</feature>
<protein>
    <recommendedName>
        <fullName>Ca(2+)/H(+) antiporter</fullName>
    </recommendedName>
    <alternativeName>
        <fullName>SynCAX</fullName>
    </alternativeName>
</protein>
<dbReference type="EMBL" id="BA000022">
    <property type="protein sequence ID" value="BAA18148.1"/>
    <property type="molecule type" value="Genomic_DNA"/>
</dbReference>
<dbReference type="PIR" id="S75587">
    <property type="entry name" value="S75587"/>
</dbReference>
<dbReference type="SMR" id="P74072"/>
<dbReference type="FunCoup" id="P74072">
    <property type="interactions" value="141"/>
</dbReference>
<dbReference type="STRING" id="1148.gene:10499021"/>
<dbReference type="TCDB" id="2.A.19.2.1">
    <property type="family name" value="the ca(2+):cation antiporter (caca) family"/>
</dbReference>
<dbReference type="PaxDb" id="1148-1653233"/>
<dbReference type="EnsemblBacteria" id="BAA18148">
    <property type="protein sequence ID" value="BAA18148"/>
    <property type="gene ID" value="BAA18148"/>
</dbReference>
<dbReference type="KEGG" id="syn:slr1336"/>
<dbReference type="eggNOG" id="COG0387">
    <property type="taxonomic scope" value="Bacteria"/>
</dbReference>
<dbReference type="InParanoid" id="P74072"/>
<dbReference type="PhylomeDB" id="P74072"/>
<dbReference type="Proteomes" id="UP000001425">
    <property type="component" value="Chromosome"/>
</dbReference>
<dbReference type="GO" id="GO:0005886">
    <property type="term" value="C:plasma membrane"/>
    <property type="evidence" value="ECO:0000314"/>
    <property type="project" value="UniProtKB"/>
</dbReference>
<dbReference type="GO" id="GO:0015369">
    <property type="term" value="F:calcium:proton antiporter activity"/>
    <property type="evidence" value="ECO:0000314"/>
    <property type="project" value="UniProtKB"/>
</dbReference>
<dbReference type="GO" id="GO:0070588">
    <property type="term" value="P:calcium ion transmembrane transport"/>
    <property type="evidence" value="ECO:0000314"/>
    <property type="project" value="UniProtKB"/>
</dbReference>
<dbReference type="GO" id="GO:0006874">
    <property type="term" value="P:intracellular calcium ion homeostasis"/>
    <property type="evidence" value="ECO:0000318"/>
    <property type="project" value="GO_Central"/>
</dbReference>
<dbReference type="Gene3D" id="1.20.1420.30">
    <property type="entry name" value="NCX, central ion-binding region"/>
    <property type="match status" value="2"/>
</dbReference>
<dbReference type="InterPro" id="IPR004713">
    <property type="entry name" value="CaH_exchang"/>
</dbReference>
<dbReference type="InterPro" id="IPR004798">
    <property type="entry name" value="CAX-like"/>
</dbReference>
<dbReference type="InterPro" id="IPR004837">
    <property type="entry name" value="NaCa_Exmemb"/>
</dbReference>
<dbReference type="InterPro" id="IPR044880">
    <property type="entry name" value="NCX_ion-bd_dom_sf"/>
</dbReference>
<dbReference type="NCBIfam" id="TIGR00846">
    <property type="entry name" value="caca2"/>
    <property type="match status" value="1"/>
</dbReference>
<dbReference type="NCBIfam" id="TIGR00378">
    <property type="entry name" value="cax"/>
    <property type="match status" value="1"/>
</dbReference>
<dbReference type="PANTHER" id="PTHR31503">
    <property type="entry name" value="VACUOLAR CALCIUM ION TRANSPORTER"/>
    <property type="match status" value="1"/>
</dbReference>
<dbReference type="PANTHER" id="PTHR31503:SF22">
    <property type="entry name" value="VACUOLAR CALCIUM ION TRANSPORTER"/>
    <property type="match status" value="1"/>
</dbReference>
<dbReference type="Pfam" id="PF01699">
    <property type="entry name" value="Na_Ca_ex"/>
    <property type="match status" value="2"/>
</dbReference>
<proteinExistence type="evidence at protein level"/>
<sequence>MSTKSKIFLVLLVFCPLSFAAHWLGWGETTVFILAGLAIVPLAAFMGTATEEIAVVIGPNAGGLLNATFGNATELILAYIALKEGLIEVVKATLTGSIIGNLLLVMGFAVFLGGLRYKEQNFQPLAARLNASTMNLGVVAILLPTALQYTSTGVEETVLQNLSVAVAVVLIGVYLLSLVFSMGTHAYLYDVGVAENMEMPELGEDVSEPEPPTEEEKPNLWLWTGVLLVVTLGVAVESELLVGSLEVATESLGLTALFTGVIVLPIIGNAAEHATAVTVAMKDKMDLSMSVVMGSSLQIAFFVAPVLVIVGWAIGQPMDLNFNPFELVAVLVAVLIVNSISSDGTSNWLEGILLLATYAIVALAFFFHPTLV</sequence>
<organism>
    <name type="scientific">Synechocystis sp. (strain ATCC 27184 / PCC 6803 / Kazusa)</name>
    <dbReference type="NCBI Taxonomy" id="1111708"/>
    <lineage>
        <taxon>Bacteria</taxon>
        <taxon>Bacillati</taxon>
        <taxon>Cyanobacteriota</taxon>
        <taxon>Cyanophyceae</taxon>
        <taxon>Synechococcales</taxon>
        <taxon>Merismopediaceae</taxon>
        <taxon>Synechocystis</taxon>
    </lineage>
</organism>
<keyword id="KW-0050">Antiport</keyword>
<keyword id="KW-0106">Calcium</keyword>
<keyword id="KW-0109">Calcium transport</keyword>
<keyword id="KW-0997">Cell inner membrane</keyword>
<keyword id="KW-1003">Cell membrane</keyword>
<keyword id="KW-0406">Ion transport</keyword>
<keyword id="KW-0472">Membrane</keyword>
<keyword id="KW-1185">Reference proteome</keyword>
<keyword id="KW-0812">Transmembrane</keyword>
<keyword id="KW-1133">Transmembrane helix</keyword>
<keyword id="KW-0813">Transport</keyword>
<evidence type="ECO:0000255" key="1"/>
<evidence type="ECO:0000269" key="2">
    <source>
    </source>
</evidence>
<evidence type="ECO:0000305" key="3"/>